<protein>
    <recommendedName>
        <fullName evidence="2">Homocitrate synthase</fullName>
        <shortName evidence="2">HCS</shortName>
        <ecNumber evidence="1 2">2.3.3.14</ecNumber>
    </recommendedName>
</protein>
<reference key="1">
    <citation type="journal article" date="2001" name="Proc. Natl. Acad. Sci. U.S.A.">
        <title>The complete genome of the crenarchaeon Sulfolobus solfataricus P2.</title>
        <authorList>
            <person name="She Q."/>
            <person name="Singh R.K."/>
            <person name="Confalonieri F."/>
            <person name="Zivanovic Y."/>
            <person name="Allard G."/>
            <person name="Awayez M.J."/>
            <person name="Chan-Weiher C.C.-Y."/>
            <person name="Clausen I.G."/>
            <person name="Curtis B.A."/>
            <person name="De Moors A."/>
            <person name="Erauso G."/>
            <person name="Fletcher C."/>
            <person name="Gordon P.M.K."/>
            <person name="Heikamp-de Jong I."/>
            <person name="Jeffries A.C."/>
            <person name="Kozera C.J."/>
            <person name="Medina N."/>
            <person name="Peng X."/>
            <person name="Thi-Ngoc H.P."/>
            <person name="Redder P."/>
            <person name="Schenk M.E."/>
            <person name="Theriault C."/>
            <person name="Tolstrup N."/>
            <person name="Charlebois R.L."/>
            <person name="Doolittle W.F."/>
            <person name="Duguet M."/>
            <person name="Gaasterland T."/>
            <person name="Garrett R.A."/>
            <person name="Ragan M.A."/>
            <person name="Sensen C.W."/>
            <person name="Van der Oost J."/>
        </authorList>
    </citation>
    <scope>NUCLEOTIDE SEQUENCE [LARGE SCALE GENOMIC DNA]</scope>
    <source>
        <strain>ATCC 35092 / DSM 1617 / JCM 11322 / P2</strain>
    </source>
</reference>
<organism>
    <name type="scientific">Saccharolobus solfataricus (strain ATCC 35092 / DSM 1617 / JCM 11322 / P2)</name>
    <name type="common">Sulfolobus solfataricus</name>
    <dbReference type="NCBI Taxonomy" id="273057"/>
    <lineage>
        <taxon>Archaea</taxon>
        <taxon>Thermoproteota</taxon>
        <taxon>Thermoprotei</taxon>
        <taxon>Sulfolobales</taxon>
        <taxon>Sulfolobaceae</taxon>
        <taxon>Saccharolobus</taxon>
    </lineage>
</organism>
<sequence length="461" mass="50882">MIKVGILDSTLREGEQTPGVIFTVDQRVEIAKALSDLGVSMIEAGHPAVSPDIYEGIKRIVKLKKEGIITSEIVGHSRAVKRDIEIAAELEVDRIAIFYGVSDIHLKAKHKATREEALRVIAETISYARSHGVKVRFTAEDGSRTDFDFLVTVSRTARDAGADRVSIADTVGILYPSKTKELFSALIREVPNLEYDIHAHNDLGLAVANALAAVEGGATIVHATVNGLGERVGIVPLQQIVAAIKYHFGIEVVKLDKLQYVSSLIEKYSGIPMPPNYPITGDYAFLHKAGVHVAGVLSDPRTYEFMPPETFGRTRDYTIDKYTGKHALRDKYEKLGVKISEAEMDQILAKIKSNTTIRFYRDVDLLELAEEVTGRVLKPRPPEQIEALISVKCDSNVYTTSVTRRLSVINGVKEVMEISGDYDILVKVQAKDSNELNQIIESIRATKGVRSTLTSLVLKKM</sequence>
<feature type="chain" id="PRO_0000140423" description="Homocitrate synthase">
    <location>
        <begin position="1"/>
        <end position="461"/>
    </location>
</feature>
<feature type="domain" description="Pyruvate carboxyltransferase" evidence="3">
    <location>
        <begin position="4"/>
        <end position="259"/>
    </location>
</feature>
<feature type="active site" description="Proton acceptor" evidence="1">
    <location>
        <position position="292"/>
    </location>
</feature>
<feature type="binding site" evidence="1">
    <location>
        <position position="12"/>
    </location>
    <ligand>
        <name>2-oxoglutarate</name>
        <dbReference type="ChEBI" id="CHEBI:16810"/>
    </ligand>
</feature>
<feature type="binding site" evidence="1">
    <location>
        <position position="13"/>
    </location>
    <ligand>
        <name>Mg(2+)</name>
        <dbReference type="ChEBI" id="CHEBI:18420"/>
    </ligand>
</feature>
<feature type="binding site" evidence="1">
    <location>
        <position position="76"/>
    </location>
    <ligand>
        <name>2-oxoglutarate</name>
        <dbReference type="ChEBI" id="CHEBI:16810"/>
    </ligand>
</feature>
<feature type="binding site" evidence="1">
    <location>
        <position position="136"/>
    </location>
    <ligand>
        <name>2-oxoglutarate</name>
        <dbReference type="ChEBI" id="CHEBI:16810"/>
    </ligand>
</feature>
<feature type="binding site" evidence="1">
    <location>
        <position position="170"/>
    </location>
    <ligand>
        <name>2-oxoglutarate</name>
        <dbReference type="ChEBI" id="CHEBI:16810"/>
    </ligand>
</feature>
<feature type="binding site" evidence="1">
    <location>
        <position position="198"/>
    </location>
    <ligand>
        <name>Mg(2+)</name>
        <dbReference type="ChEBI" id="CHEBI:18420"/>
    </ligand>
</feature>
<feature type="binding site" evidence="1">
    <location>
        <position position="200"/>
    </location>
    <ligand>
        <name>Mg(2+)</name>
        <dbReference type="ChEBI" id="CHEBI:18420"/>
    </ligand>
</feature>
<evidence type="ECO:0000250" key="1">
    <source>
        <dbReference type="UniProtKB" id="O87198"/>
    </source>
</evidence>
<evidence type="ECO:0000255" key="2">
    <source>
        <dbReference type="HAMAP-Rule" id="MF_02222"/>
    </source>
</evidence>
<evidence type="ECO:0000255" key="3">
    <source>
        <dbReference type="PROSITE-ProRule" id="PRU01151"/>
    </source>
</evidence>
<accession>Q97ZE0</accession>
<dbReference type="EC" id="2.3.3.14" evidence="1 2"/>
<dbReference type="EMBL" id="AE006641">
    <property type="protein sequence ID" value="AAK41252.1"/>
    <property type="molecule type" value="Genomic_DNA"/>
</dbReference>
<dbReference type="PIR" id="E90249">
    <property type="entry name" value="E90249"/>
</dbReference>
<dbReference type="SMR" id="Q97ZE0"/>
<dbReference type="FunCoup" id="Q97ZE0">
    <property type="interactions" value="291"/>
</dbReference>
<dbReference type="STRING" id="273057.SSO0977"/>
<dbReference type="PaxDb" id="273057-SSO0977"/>
<dbReference type="EnsemblBacteria" id="AAK41252">
    <property type="protein sequence ID" value="AAK41252"/>
    <property type="gene ID" value="SSO0977"/>
</dbReference>
<dbReference type="KEGG" id="sso:SSO0977"/>
<dbReference type="PATRIC" id="fig|273057.12.peg.977"/>
<dbReference type="eggNOG" id="arCOG02092">
    <property type="taxonomic scope" value="Archaea"/>
</dbReference>
<dbReference type="HOGENOM" id="CLU_022158_4_0_2"/>
<dbReference type="InParanoid" id="Q97ZE0"/>
<dbReference type="PhylomeDB" id="Q97ZE0"/>
<dbReference type="UniPathway" id="UPA00033">
    <property type="reaction ID" value="UER00028"/>
</dbReference>
<dbReference type="Proteomes" id="UP000001974">
    <property type="component" value="Chromosome"/>
</dbReference>
<dbReference type="GO" id="GO:0003852">
    <property type="term" value="F:2-isopropylmalate synthase activity"/>
    <property type="evidence" value="ECO:0000318"/>
    <property type="project" value="GO_Central"/>
</dbReference>
<dbReference type="GO" id="GO:0004410">
    <property type="term" value="F:homocitrate synthase activity"/>
    <property type="evidence" value="ECO:0007669"/>
    <property type="project" value="UniProtKB-UniRule"/>
</dbReference>
<dbReference type="GO" id="GO:0046872">
    <property type="term" value="F:metal ion binding"/>
    <property type="evidence" value="ECO:0007669"/>
    <property type="project" value="UniProtKB-KW"/>
</dbReference>
<dbReference type="GO" id="GO:0009098">
    <property type="term" value="P:L-leucine biosynthetic process"/>
    <property type="evidence" value="ECO:0000318"/>
    <property type="project" value="GO_Central"/>
</dbReference>
<dbReference type="GO" id="GO:0019878">
    <property type="term" value="P:lysine biosynthetic process via aminoadipic acid"/>
    <property type="evidence" value="ECO:0007669"/>
    <property type="project" value="UniProtKB-UniRule"/>
</dbReference>
<dbReference type="CDD" id="cd07940">
    <property type="entry name" value="DRE_TIM_IPMS"/>
    <property type="match status" value="1"/>
</dbReference>
<dbReference type="Gene3D" id="1.10.238.260">
    <property type="match status" value="1"/>
</dbReference>
<dbReference type="Gene3D" id="3.30.70.920">
    <property type="match status" value="1"/>
</dbReference>
<dbReference type="Gene3D" id="3.20.20.70">
    <property type="entry name" value="Aldolase class I"/>
    <property type="match status" value="1"/>
</dbReference>
<dbReference type="HAMAP" id="MF_02222">
    <property type="entry name" value="Homocitr_synth_fung_arch"/>
    <property type="match status" value="1"/>
</dbReference>
<dbReference type="InterPro" id="IPR050073">
    <property type="entry name" value="2-IPM_HCS-like"/>
</dbReference>
<dbReference type="InterPro" id="IPR013785">
    <property type="entry name" value="Aldolase_TIM"/>
</dbReference>
<dbReference type="InterPro" id="IPR011008">
    <property type="entry name" value="Dimeric_a/b-barrel"/>
</dbReference>
<dbReference type="InterPro" id="IPR011872">
    <property type="entry name" value="Homocitrate_synth"/>
</dbReference>
<dbReference type="InterPro" id="IPR054691">
    <property type="entry name" value="LeuA/HCS_post-cat"/>
</dbReference>
<dbReference type="InterPro" id="IPR000891">
    <property type="entry name" value="PYR_CT"/>
</dbReference>
<dbReference type="InterPro" id="IPR019887">
    <property type="entry name" value="Tscrpt_reg_AsnC/Lrp_C"/>
</dbReference>
<dbReference type="NCBIfam" id="TIGR02146">
    <property type="entry name" value="LysS_fung_arch"/>
    <property type="match status" value="1"/>
</dbReference>
<dbReference type="NCBIfam" id="NF002085">
    <property type="entry name" value="PRK00915.1-2"/>
    <property type="match status" value="1"/>
</dbReference>
<dbReference type="PANTHER" id="PTHR10277:SF63">
    <property type="entry name" value="HOMOCITRATE SYNTHASE"/>
    <property type="match status" value="1"/>
</dbReference>
<dbReference type="PANTHER" id="PTHR10277">
    <property type="entry name" value="HOMOCITRATE SYNTHASE-RELATED"/>
    <property type="match status" value="1"/>
</dbReference>
<dbReference type="Pfam" id="PF01037">
    <property type="entry name" value="AsnC_trans_reg"/>
    <property type="match status" value="1"/>
</dbReference>
<dbReference type="Pfam" id="PF22617">
    <property type="entry name" value="HCS_D2"/>
    <property type="match status" value="1"/>
</dbReference>
<dbReference type="Pfam" id="PF00682">
    <property type="entry name" value="HMGL-like"/>
    <property type="match status" value="1"/>
</dbReference>
<dbReference type="SUPFAM" id="SSF51569">
    <property type="entry name" value="Aldolase"/>
    <property type="match status" value="1"/>
</dbReference>
<dbReference type="SUPFAM" id="SSF54909">
    <property type="entry name" value="Dimeric alpha+beta barrel"/>
    <property type="match status" value="1"/>
</dbReference>
<dbReference type="PROSITE" id="PS50991">
    <property type="entry name" value="PYR_CT"/>
    <property type="match status" value="1"/>
</dbReference>
<comment type="function">
    <text evidence="1">Catalyzes the aldol-type condensation of 2-oxoglutarate with acetyl-CoA to yield homocitrate. Carries out the first step of the alpha-aminoadipate (AAA) lysine biosynthesis pathway.</text>
</comment>
<comment type="catalytic activity">
    <reaction evidence="1">
        <text>acetyl-CoA + 2-oxoglutarate + H2O = (2R)-homocitrate + CoA + H(+)</text>
        <dbReference type="Rhea" id="RHEA:12929"/>
        <dbReference type="ChEBI" id="CHEBI:15377"/>
        <dbReference type="ChEBI" id="CHEBI:15378"/>
        <dbReference type="ChEBI" id="CHEBI:16810"/>
        <dbReference type="ChEBI" id="CHEBI:57287"/>
        <dbReference type="ChEBI" id="CHEBI:57288"/>
        <dbReference type="ChEBI" id="CHEBI:58884"/>
        <dbReference type="EC" id="2.3.3.14"/>
    </reaction>
    <physiologicalReaction direction="left-to-right" evidence="1">
        <dbReference type="Rhea" id="RHEA:12930"/>
    </physiologicalReaction>
</comment>
<comment type="cofactor">
    <cofactor evidence="1">
        <name>Mg(2+)</name>
        <dbReference type="ChEBI" id="CHEBI:18420"/>
    </cofactor>
    <cofactor evidence="1">
        <name>Mn(2+)</name>
        <dbReference type="ChEBI" id="CHEBI:29035"/>
    </cofactor>
</comment>
<comment type="pathway">
    <text evidence="1">Amino-acid biosynthesis; L-lysine biosynthesis via AAA pathway; L-alpha-aminoadipate from 2-oxoglutarate: step 1/5.</text>
</comment>
<comment type="similarity">
    <text evidence="2">Belongs to the alpha-IPM synthase/homocitrate synthase family. Homocitrate synthase LYS20/LYS21 subfamily.</text>
</comment>
<proteinExistence type="inferred from homology"/>
<gene>
    <name type="ordered locus">SSO0977</name>
</gene>
<name>HOSA_SACS2</name>
<keyword id="KW-0028">Amino-acid biosynthesis</keyword>
<keyword id="KW-0457">Lysine biosynthesis</keyword>
<keyword id="KW-0460">Magnesium</keyword>
<keyword id="KW-0464">Manganese</keyword>
<keyword id="KW-0479">Metal-binding</keyword>
<keyword id="KW-1185">Reference proteome</keyword>
<keyword id="KW-0808">Transferase</keyword>